<protein>
    <recommendedName>
        <fullName evidence="1">Small ribosomal subunit protein uS9</fullName>
    </recommendedName>
    <alternativeName>
        <fullName evidence="2">30S ribosomal protein S9</fullName>
    </alternativeName>
</protein>
<keyword id="KW-0687">Ribonucleoprotein</keyword>
<keyword id="KW-0689">Ribosomal protein</keyword>
<evidence type="ECO:0000255" key="1">
    <source>
        <dbReference type="HAMAP-Rule" id="MF_00532"/>
    </source>
</evidence>
<evidence type="ECO:0000305" key="2"/>
<proteinExistence type="inferred from homology"/>
<feature type="chain" id="PRO_1000051228" description="Small ribosomal subunit protein uS9">
    <location>
        <begin position="1"/>
        <end position="130"/>
    </location>
</feature>
<name>RS9_HAEIG</name>
<sequence length="130" mass="14715">MAENQNYGTGRRKSSSARVFIKPGSGKITINQRELDVYFGRETARMVVRQPLELVELTDKLDLYITVKGGGISGQAGAIRHGITRALMEYDETLRPALRAAGFVTRDARRVERKKVGLHKARRRPQYSKR</sequence>
<comment type="similarity">
    <text evidence="1">Belongs to the universal ribosomal protein uS9 family.</text>
</comment>
<organism>
    <name type="scientific">Haemophilus influenzae (strain PittGG)</name>
    <dbReference type="NCBI Taxonomy" id="374931"/>
    <lineage>
        <taxon>Bacteria</taxon>
        <taxon>Pseudomonadati</taxon>
        <taxon>Pseudomonadota</taxon>
        <taxon>Gammaproteobacteria</taxon>
        <taxon>Pasteurellales</taxon>
        <taxon>Pasteurellaceae</taxon>
        <taxon>Haemophilus</taxon>
    </lineage>
</organism>
<gene>
    <name evidence="1" type="primary">rpsI</name>
    <name type="ordered locus">CGSHiGG_01095</name>
</gene>
<reference key="1">
    <citation type="journal article" date="2007" name="Genome Biol.">
        <title>Characterization and modeling of the Haemophilus influenzae core and supragenomes based on the complete genomic sequences of Rd and 12 clinical nontypeable strains.</title>
        <authorList>
            <person name="Hogg J.S."/>
            <person name="Hu F.Z."/>
            <person name="Janto B."/>
            <person name="Boissy R."/>
            <person name="Hayes J."/>
            <person name="Keefe R."/>
            <person name="Post J.C."/>
            <person name="Ehrlich G.D."/>
        </authorList>
    </citation>
    <scope>NUCLEOTIDE SEQUENCE [LARGE SCALE GENOMIC DNA]</scope>
    <source>
        <strain>PittGG</strain>
    </source>
</reference>
<accession>A5UEV9</accession>
<dbReference type="EMBL" id="CP000672">
    <property type="protein sequence ID" value="ABQ99314.1"/>
    <property type="molecule type" value="Genomic_DNA"/>
</dbReference>
<dbReference type="SMR" id="A5UEV9"/>
<dbReference type="KEGG" id="hiq:CGSHiGG_01095"/>
<dbReference type="HOGENOM" id="CLU_046483_2_1_6"/>
<dbReference type="Proteomes" id="UP000001990">
    <property type="component" value="Chromosome"/>
</dbReference>
<dbReference type="GO" id="GO:0022627">
    <property type="term" value="C:cytosolic small ribosomal subunit"/>
    <property type="evidence" value="ECO:0007669"/>
    <property type="project" value="TreeGrafter"/>
</dbReference>
<dbReference type="GO" id="GO:0003723">
    <property type="term" value="F:RNA binding"/>
    <property type="evidence" value="ECO:0007669"/>
    <property type="project" value="TreeGrafter"/>
</dbReference>
<dbReference type="GO" id="GO:0003735">
    <property type="term" value="F:structural constituent of ribosome"/>
    <property type="evidence" value="ECO:0007669"/>
    <property type="project" value="InterPro"/>
</dbReference>
<dbReference type="GO" id="GO:0006412">
    <property type="term" value="P:translation"/>
    <property type="evidence" value="ECO:0007669"/>
    <property type="project" value="UniProtKB-UniRule"/>
</dbReference>
<dbReference type="FunFam" id="3.30.230.10:FF:000001">
    <property type="entry name" value="30S ribosomal protein S9"/>
    <property type="match status" value="1"/>
</dbReference>
<dbReference type="Gene3D" id="3.30.230.10">
    <property type="match status" value="1"/>
</dbReference>
<dbReference type="HAMAP" id="MF_00532_B">
    <property type="entry name" value="Ribosomal_uS9_B"/>
    <property type="match status" value="1"/>
</dbReference>
<dbReference type="InterPro" id="IPR020568">
    <property type="entry name" value="Ribosomal_Su5_D2-typ_SF"/>
</dbReference>
<dbReference type="InterPro" id="IPR000754">
    <property type="entry name" value="Ribosomal_uS9"/>
</dbReference>
<dbReference type="InterPro" id="IPR023035">
    <property type="entry name" value="Ribosomal_uS9_bac/plastid"/>
</dbReference>
<dbReference type="InterPro" id="IPR020574">
    <property type="entry name" value="Ribosomal_uS9_CS"/>
</dbReference>
<dbReference type="InterPro" id="IPR014721">
    <property type="entry name" value="Ribsml_uS5_D2-typ_fold_subgr"/>
</dbReference>
<dbReference type="NCBIfam" id="NF001099">
    <property type="entry name" value="PRK00132.1"/>
    <property type="match status" value="1"/>
</dbReference>
<dbReference type="PANTHER" id="PTHR21569">
    <property type="entry name" value="RIBOSOMAL PROTEIN S9"/>
    <property type="match status" value="1"/>
</dbReference>
<dbReference type="PANTHER" id="PTHR21569:SF1">
    <property type="entry name" value="SMALL RIBOSOMAL SUBUNIT PROTEIN US9M"/>
    <property type="match status" value="1"/>
</dbReference>
<dbReference type="Pfam" id="PF00380">
    <property type="entry name" value="Ribosomal_S9"/>
    <property type="match status" value="1"/>
</dbReference>
<dbReference type="SUPFAM" id="SSF54211">
    <property type="entry name" value="Ribosomal protein S5 domain 2-like"/>
    <property type="match status" value="1"/>
</dbReference>
<dbReference type="PROSITE" id="PS00360">
    <property type="entry name" value="RIBOSOMAL_S9"/>
    <property type="match status" value="1"/>
</dbReference>